<feature type="chain" id="PRO_0000230674" description="Thiosulfate sulfurtransferase/rhodanese-like domain-containing protein 2">
    <location>
        <begin position="1"/>
        <end position="495"/>
    </location>
</feature>
<feature type="domain" description="Rhodanese" evidence="2">
    <location>
        <begin position="300"/>
        <end position="395"/>
    </location>
</feature>
<feature type="active site" description="Cysteine persulfide intermediate" evidence="2">
    <location>
        <position position="354"/>
    </location>
</feature>
<feature type="modified residue" description="Phosphoserine" evidence="1">
    <location>
        <position position="268"/>
    </location>
</feature>
<feature type="sequence conflict" description="In Ref. 3; AAH57893." evidence="3" ref="3">
    <original>L</original>
    <variation>I</variation>
    <location>
        <position position="59"/>
    </location>
</feature>
<feature type="sequence conflict" description="In Ref. 1; BAC25846." evidence="3" ref="1">
    <original>K</original>
    <variation>T</variation>
    <location>
        <position position="276"/>
    </location>
</feature>
<feature type="sequence conflict" description="In Ref. 3; AAH57893." evidence="3" ref="3">
    <original>N</original>
    <variation>D</variation>
    <location>
        <position position="303"/>
    </location>
</feature>
<organism>
    <name type="scientific">Mus musculus</name>
    <name type="common">Mouse</name>
    <dbReference type="NCBI Taxonomy" id="10090"/>
    <lineage>
        <taxon>Eukaryota</taxon>
        <taxon>Metazoa</taxon>
        <taxon>Chordata</taxon>
        <taxon>Craniata</taxon>
        <taxon>Vertebrata</taxon>
        <taxon>Euteleostomi</taxon>
        <taxon>Mammalia</taxon>
        <taxon>Eutheria</taxon>
        <taxon>Euarchontoglires</taxon>
        <taxon>Glires</taxon>
        <taxon>Rodentia</taxon>
        <taxon>Myomorpha</taxon>
        <taxon>Muroidea</taxon>
        <taxon>Muridae</taxon>
        <taxon>Murinae</taxon>
        <taxon>Mus</taxon>
        <taxon>Mus</taxon>
    </lineage>
</organism>
<evidence type="ECO:0000250" key="1">
    <source>
        <dbReference type="UniProtKB" id="Q5T7W7"/>
    </source>
</evidence>
<evidence type="ECO:0000255" key="2">
    <source>
        <dbReference type="PROSITE-ProRule" id="PRU00173"/>
    </source>
</evidence>
<evidence type="ECO:0000305" key="3"/>
<proteinExistence type="evidence at transcript level"/>
<reference key="1">
    <citation type="journal article" date="2005" name="Science">
        <title>The transcriptional landscape of the mammalian genome.</title>
        <authorList>
            <person name="Carninci P."/>
            <person name="Kasukawa T."/>
            <person name="Katayama S."/>
            <person name="Gough J."/>
            <person name="Frith M.C."/>
            <person name="Maeda N."/>
            <person name="Oyama R."/>
            <person name="Ravasi T."/>
            <person name="Lenhard B."/>
            <person name="Wells C."/>
            <person name="Kodzius R."/>
            <person name="Shimokawa K."/>
            <person name="Bajic V.B."/>
            <person name="Brenner S.E."/>
            <person name="Batalov S."/>
            <person name="Forrest A.R."/>
            <person name="Zavolan M."/>
            <person name="Davis M.J."/>
            <person name="Wilming L.G."/>
            <person name="Aidinis V."/>
            <person name="Allen J.E."/>
            <person name="Ambesi-Impiombato A."/>
            <person name="Apweiler R."/>
            <person name="Aturaliya R.N."/>
            <person name="Bailey T.L."/>
            <person name="Bansal M."/>
            <person name="Baxter L."/>
            <person name="Beisel K.W."/>
            <person name="Bersano T."/>
            <person name="Bono H."/>
            <person name="Chalk A.M."/>
            <person name="Chiu K.P."/>
            <person name="Choudhary V."/>
            <person name="Christoffels A."/>
            <person name="Clutterbuck D.R."/>
            <person name="Crowe M.L."/>
            <person name="Dalla E."/>
            <person name="Dalrymple B.P."/>
            <person name="de Bono B."/>
            <person name="Della Gatta G."/>
            <person name="di Bernardo D."/>
            <person name="Down T."/>
            <person name="Engstrom P."/>
            <person name="Fagiolini M."/>
            <person name="Faulkner G."/>
            <person name="Fletcher C.F."/>
            <person name="Fukushima T."/>
            <person name="Furuno M."/>
            <person name="Futaki S."/>
            <person name="Gariboldi M."/>
            <person name="Georgii-Hemming P."/>
            <person name="Gingeras T.R."/>
            <person name="Gojobori T."/>
            <person name="Green R.E."/>
            <person name="Gustincich S."/>
            <person name="Harbers M."/>
            <person name="Hayashi Y."/>
            <person name="Hensch T.K."/>
            <person name="Hirokawa N."/>
            <person name="Hill D."/>
            <person name="Huminiecki L."/>
            <person name="Iacono M."/>
            <person name="Ikeo K."/>
            <person name="Iwama A."/>
            <person name="Ishikawa T."/>
            <person name="Jakt M."/>
            <person name="Kanapin A."/>
            <person name="Katoh M."/>
            <person name="Kawasawa Y."/>
            <person name="Kelso J."/>
            <person name="Kitamura H."/>
            <person name="Kitano H."/>
            <person name="Kollias G."/>
            <person name="Krishnan S.P."/>
            <person name="Kruger A."/>
            <person name="Kummerfeld S.K."/>
            <person name="Kurochkin I.V."/>
            <person name="Lareau L.F."/>
            <person name="Lazarevic D."/>
            <person name="Lipovich L."/>
            <person name="Liu J."/>
            <person name="Liuni S."/>
            <person name="McWilliam S."/>
            <person name="Madan Babu M."/>
            <person name="Madera M."/>
            <person name="Marchionni L."/>
            <person name="Matsuda H."/>
            <person name="Matsuzawa S."/>
            <person name="Miki H."/>
            <person name="Mignone F."/>
            <person name="Miyake S."/>
            <person name="Morris K."/>
            <person name="Mottagui-Tabar S."/>
            <person name="Mulder N."/>
            <person name="Nakano N."/>
            <person name="Nakauchi H."/>
            <person name="Ng P."/>
            <person name="Nilsson R."/>
            <person name="Nishiguchi S."/>
            <person name="Nishikawa S."/>
            <person name="Nori F."/>
            <person name="Ohara O."/>
            <person name="Okazaki Y."/>
            <person name="Orlando V."/>
            <person name="Pang K.C."/>
            <person name="Pavan W.J."/>
            <person name="Pavesi G."/>
            <person name="Pesole G."/>
            <person name="Petrovsky N."/>
            <person name="Piazza S."/>
            <person name="Reed J."/>
            <person name="Reid J.F."/>
            <person name="Ring B.Z."/>
            <person name="Ringwald M."/>
            <person name="Rost B."/>
            <person name="Ruan Y."/>
            <person name="Salzberg S.L."/>
            <person name="Sandelin A."/>
            <person name="Schneider C."/>
            <person name="Schoenbach C."/>
            <person name="Sekiguchi K."/>
            <person name="Semple C.A."/>
            <person name="Seno S."/>
            <person name="Sessa L."/>
            <person name="Sheng Y."/>
            <person name="Shibata Y."/>
            <person name="Shimada H."/>
            <person name="Shimada K."/>
            <person name="Silva D."/>
            <person name="Sinclair B."/>
            <person name="Sperling S."/>
            <person name="Stupka E."/>
            <person name="Sugiura K."/>
            <person name="Sultana R."/>
            <person name="Takenaka Y."/>
            <person name="Taki K."/>
            <person name="Tammoja K."/>
            <person name="Tan S.L."/>
            <person name="Tang S."/>
            <person name="Taylor M.S."/>
            <person name="Tegner J."/>
            <person name="Teichmann S.A."/>
            <person name="Ueda H.R."/>
            <person name="van Nimwegen E."/>
            <person name="Verardo R."/>
            <person name="Wei C.L."/>
            <person name="Yagi K."/>
            <person name="Yamanishi H."/>
            <person name="Zabarovsky E."/>
            <person name="Zhu S."/>
            <person name="Zimmer A."/>
            <person name="Hide W."/>
            <person name="Bult C."/>
            <person name="Grimmond S.M."/>
            <person name="Teasdale R.D."/>
            <person name="Liu E.T."/>
            <person name="Brusic V."/>
            <person name="Quackenbush J."/>
            <person name="Wahlestedt C."/>
            <person name="Mattick J.S."/>
            <person name="Hume D.A."/>
            <person name="Kai C."/>
            <person name="Sasaki D."/>
            <person name="Tomaru Y."/>
            <person name="Fukuda S."/>
            <person name="Kanamori-Katayama M."/>
            <person name="Suzuki M."/>
            <person name="Aoki J."/>
            <person name="Arakawa T."/>
            <person name="Iida J."/>
            <person name="Imamura K."/>
            <person name="Itoh M."/>
            <person name="Kato T."/>
            <person name="Kawaji H."/>
            <person name="Kawagashira N."/>
            <person name="Kawashima T."/>
            <person name="Kojima M."/>
            <person name="Kondo S."/>
            <person name="Konno H."/>
            <person name="Nakano K."/>
            <person name="Ninomiya N."/>
            <person name="Nishio T."/>
            <person name="Okada M."/>
            <person name="Plessy C."/>
            <person name="Shibata K."/>
            <person name="Shiraki T."/>
            <person name="Suzuki S."/>
            <person name="Tagami M."/>
            <person name="Waki K."/>
            <person name="Watahiki A."/>
            <person name="Okamura-Oho Y."/>
            <person name="Suzuki H."/>
            <person name="Kawai J."/>
            <person name="Hayashizaki Y."/>
        </authorList>
    </citation>
    <scope>NUCLEOTIDE SEQUENCE [LARGE SCALE MRNA]</scope>
    <source>
        <strain>C57BL/6J</strain>
        <strain>NOD</strain>
        <tissue>Head</tissue>
    </source>
</reference>
<reference key="2">
    <citation type="journal article" date="2009" name="PLoS Biol.">
        <title>Lineage-specific biology revealed by a finished genome assembly of the mouse.</title>
        <authorList>
            <person name="Church D.M."/>
            <person name="Goodstadt L."/>
            <person name="Hillier L.W."/>
            <person name="Zody M.C."/>
            <person name="Goldstein S."/>
            <person name="She X."/>
            <person name="Bult C.J."/>
            <person name="Agarwala R."/>
            <person name="Cherry J.L."/>
            <person name="DiCuccio M."/>
            <person name="Hlavina W."/>
            <person name="Kapustin Y."/>
            <person name="Meric P."/>
            <person name="Maglott D."/>
            <person name="Birtle Z."/>
            <person name="Marques A.C."/>
            <person name="Graves T."/>
            <person name="Zhou S."/>
            <person name="Teague B."/>
            <person name="Potamousis K."/>
            <person name="Churas C."/>
            <person name="Place M."/>
            <person name="Herschleb J."/>
            <person name="Runnheim R."/>
            <person name="Forrest D."/>
            <person name="Amos-Landgraf J."/>
            <person name="Schwartz D.C."/>
            <person name="Cheng Z."/>
            <person name="Lindblad-Toh K."/>
            <person name="Eichler E.E."/>
            <person name="Ponting C.P."/>
        </authorList>
    </citation>
    <scope>NUCLEOTIDE SEQUENCE [LARGE SCALE GENOMIC DNA]</scope>
    <source>
        <strain>C57BL/6J</strain>
    </source>
</reference>
<reference key="3">
    <citation type="journal article" date="2004" name="Genome Res.">
        <title>The status, quality, and expansion of the NIH full-length cDNA project: the Mammalian Gene Collection (MGC).</title>
        <authorList>
            <consortium name="The MGC Project Team"/>
        </authorList>
    </citation>
    <scope>NUCLEOTIDE SEQUENCE [LARGE SCALE MRNA]</scope>
    <source>
        <strain>NMRI</strain>
        <tissue>Mammary tumor</tissue>
    </source>
</reference>
<keyword id="KW-0597">Phosphoprotein</keyword>
<keyword id="KW-1185">Reference proteome</keyword>
<dbReference type="EMBL" id="AK028258">
    <property type="protein sequence ID" value="BAC25846.1"/>
    <property type="molecule type" value="mRNA"/>
</dbReference>
<dbReference type="EMBL" id="AK155456">
    <property type="protein sequence ID" value="BAE33273.1"/>
    <property type="molecule type" value="mRNA"/>
</dbReference>
<dbReference type="EMBL" id="AL732615">
    <property type="status" value="NOT_ANNOTATED_CDS"/>
    <property type="molecule type" value="Genomic_DNA"/>
</dbReference>
<dbReference type="EMBL" id="BC057893">
    <property type="protein sequence ID" value="AAH57893.1"/>
    <property type="molecule type" value="mRNA"/>
</dbReference>
<dbReference type="CCDS" id="CCDS38757.1"/>
<dbReference type="RefSeq" id="NP_001342304.1">
    <property type="nucleotide sequence ID" value="NM_001355375.1"/>
</dbReference>
<dbReference type="RefSeq" id="NP_001342305.1">
    <property type="nucleotide sequence ID" value="NM_001355376.1"/>
</dbReference>
<dbReference type="RefSeq" id="NP_766621.3">
    <property type="nucleotide sequence ID" value="NM_173033.3"/>
</dbReference>
<dbReference type="RefSeq" id="XP_006538023.1">
    <property type="nucleotide sequence ID" value="XM_006537960.4"/>
</dbReference>
<dbReference type="RefSeq" id="XP_006538024.1">
    <property type="nucleotide sequence ID" value="XM_006537961.5"/>
</dbReference>
<dbReference type="RefSeq" id="XP_006538025.1">
    <property type="nucleotide sequence ID" value="XM_006537962.5"/>
</dbReference>
<dbReference type="RefSeq" id="XP_006538026.1">
    <property type="nucleotide sequence ID" value="XM_006537963.5"/>
</dbReference>
<dbReference type="RefSeq" id="XP_006538027.1">
    <property type="nucleotide sequence ID" value="XM_006537964.2"/>
</dbReference>
<dbReference type="RefSeq" id="XP_006538028.1">
    <property type="nucleotide sequence ID" value="XM_006537965.3"/>
</dbReference>
<dbReference type="RefSeq" id="XP_036020064.1">
    <property type="nucleotide sequence ID" value="XM_036164171.1"/>
</dbReference>
<dbReference type="SMR" id="Q3U269"/>
<dbReference type="BioGRID" id="234861">
    <property type="interactions" value="1"/>
</dbReference>
<dbReference type="FunCoup" id="Q3U269">
    <property type="interactions" value="204"/>
</dbReference>
<dbReference type="STRING" id="10090.ENSMUSP00000103401"/>
<dbReference type="iPTMnet" id="Q3U269"/>
<dbReference type="PhosphoSitePlus" id="Q3U269"/>
<dbReference type="PaxDb" id="10090-ENSMUSP00000103401"/>
<dbReference type="ProteomicsDB" id="298152"/>
<dbReference type="Pumba" id="Q3U269"/>
<dbReference type="Antibodypedia" id="14352">
    <property type="antibodies" value="26 antibodies from 8 providers"/>
</dbReference>
<dbReference type="DNASU" id="272027"/>
<dbReference type="Ensembl" id="ENSMUST00000107770.2">
    <property type="protein sequence ID" value="ENSMUSP00000103399.2"/>
    <property type="gene ID" value="ENSMUSG00000035495.16"/>
</dbReference>
<dbReference type="Ensembl" id="ENSMUST00000107772.8">
    <property type="protein sequence ID" value="ENSMUSP00000103401.2"/>
    <property type="gene ID" value="ENSMUSG00000035495.16"/>
</dbReference>
<dbReference type="GeneID" id="272027"/>
<dbReference type="KEGG" id="mmu:272027"/>
<dbReference type="UCSC" id="uc008stg.2">
    <property type="organism name" value="mouse"/>
</dbReference>
<dbReference type="AGR" id="MGI:3039624"/>
<dbReference type="CTD" id="158427"/>
<dbReference type="MGI" id="MGI:3039624">
    <property type="gene designation" value="Tstd2"/>
</dbReference>
<dbReference type="VEuPathDB" id="HostDB:ENSMUSG00000035495"/>
<dbReference type="eggNOG" id="ENOG502QSQK">
    <property type="taxonomic scope" value="Eukaryota"/>
</dbReference>
<dbReference type="GeneTree" id="ENSGT00390000016307"/>
<dbReference type="HOGENOM" id="CLU_038878_1_0_1"/>
<dbReference type="InParanoid" id="Q3U269"/>
<dbReference type="OMA" id="ECKEKLW"/>
<dbReference type="OrthoDB" id="25002at2759"/>
<dbReference type="PhylomeDB" id="Q3U269"/>
<dbReference type="TreeFam" id="TF324329"/>
<dbReference type="BioGRID-ORCS" id="272027">
    <property type="hits" value="0 hits in 76 CRISPR screens"/>
</dbReference>
<dbReference type="ChiTaRS" id="Tstd2">
    <property type="organism name" value="mouse"/>
</dbReference>
<dbReference type="PRO" id="PR:Q3U269"/>
<dbReference type="Proteomes" id="UP000000589">
    <property type="component" value="Chromosome 4"/>
</dbReference>
<dbReference type="RNAct" id="Q3U269">
    <property type="molecule type" value="protein"/>
</dbReference>
<dbReference type="Bgee" id="ENSMUSG00000035495">
    <property type="expression patterns" value="Expressed in optic fissure and 245 other cell types or tissues"/>
</dbReference>
<dbReference type="ExpressionAtlas" id="Q3U269">
    <property type="expression patterns" value="baseline and differential"/>
</dbReference>
<dbReference type="CDD" id="cd01518">
    <property type="entry name" value="RHOD_YceA"/>
    <property type="match status" value="1"/>
</dbReference>
<dbReference type="FunFam" id="3.40.250.10:FF:000022">
    <property type="entry name" value="Thiosulfate sulfurtransferase/rhodanese-like domain-containing protein 2"/>
    <property type="match status" value="1"/>
</dbReference>
<dbReference type="Gene3D" id="3.30.70.100">
    <property type="match status" value="1"/>
</dbReference>
<dbReference type="Gene3D" id="3.40.250.10">
    <property type="entry name" value="Rhodanese-like domain"/>
    <property type="match status" value="1"/>
</dbReference>
<dbReference type="InterPro" id="IPR001763">
    <property type="entry name" value="Rhodanese-like_dom"/>
</dbReference>
<dbReference type="InterPro" id="IPR036873">
    <property type="entry name" value="Rhodanese-like_dom_sf"/>
</dbReference>
<dbReference type="InterPro" id="IPR022111">
    <property type="entry name" value="Rhodanese_C"/>
</dbReference>
<dbReference type="InterPro" id="IPR020936">
    <property type="entry name" value="TrhO"/>
</dbReference>
<dbReference type="InterPro" id="IPR040503">
    <property type="entry name" value="TRHO_N"/>
</dbReference>
<dbReference type="PANTHER" id="PTHR43268">
    <property type="entry name" value="THIOSULFATE SULFURTRANSFERASE/RHODANESE-LIKE DOMAIN-CONTAINING PROTEIN 2"/>
    <property type="match status" value="1"/>
</dbReference>
<dbReference type="PANTHER" id="PTHR43268:SF6">
    <property type="entry name" value="THIOSULFATE SULFURTRANSFERASE_RHODANESE-LIKE DOMAIN-CONTAINING PROTEIN 2"/>
    <property type="match status" value="1"/>
</dbReference>
<dbReference type="Pfam" id="PF00581">
    <property type="entry name" value="Rhodanese"/>
    <property type="match status" value="1"/>
</dbReference>
<dbReference type="Pfam" id="PF12368">
    <property type="entry name" value="Rhodanese_C"/>
    <property type="match status" value="1"/>
</dbReference>
<dbReference type="Pfam" id="PF23949">
    <property type="entry name" value="TSTD2_N"/>
    <property type="match status" value="1"/>
</dbReference>
<dbReference type="Pfam" id="PF17773">
    <property type="entry name" value="UPF0176_N"/>
    <property type="match status" value="1"/>
</dbReference>
<dbReference type="SMART" id="SM00450">
    <property type="entry name" value="RHOD"/>
    <property type="match status" value="1"/>
</dbReference>
<dbReference type="SUPFAM" id="SSF52821">
    <property type="entry name" value="Rhodanese/Cell cycle control phosphatase"/>
    <property type="match status" value="1"/>
</dbReference>
<dbReference type="PROSITE" id="PS50206">
    <property type="entry name" value="RHODANESE_3"/>
    <property type="match status" value="1"/>
</dbReference>
<name>TSTD2_MOUSE</name>
<gene>
    <name type="primary">Tstd2</name>
</gene>
<accession>Q3U269</accession>
<accession>B1AWH0</accession>
<accession>Q6PES9</accession>
<accession>Q8C1D7</accession>
<sequence>MPSSTSPDEEDGLETCVLKVFDLDLKESNLVNPSNSLKAELDGSTKKKYSFAKKKAFALLVKTKQVPAPSYEFKGKRWRCCQQLFADQISIHRHVATQHAEDVYQQTASLLKQLTAALSASQSLTPTDKRSSPKDCLTPSQEVSAWLPDVSHVSPQELRSGQGDEEGEVLLYYCYCDLEDPHWVCAWQTALCHHLHLTGKIRIATEGINGTVGGSKVATRLYVEVMLSCPLFKDYLSEDDFKSSKGGSHCFPELRVGVFEEIVPMGISPSQVSYKKPGIHLSPGEFHKEIEKLLSQSSEEQGNTIILDCRNFYESKIGRFQGCLAPDIRKFSYFPSYVDKNLDIFRQKRVLMYCTGGIRCERGSAYLRAKGVCKEVFQLKGGIHKYLEEFPDGFYKGKLFVFDERFALAYNSSVVSECSYCGAPWDQYKLCSTPQCRQLVLTCSACQGQGFTACCVTCQDKGGKQASGPSQDSFKEECECTARRPRIPQEQQAQS</sequence>
<protein>
    <recommendedName>
        <fullName>Thiosulfate sulfurtransferase/rhodanese-like domain-containing protein 2</fullName>
    </recommendedName>
</protein>